<comment type="function">
    <text evidence="1">Acts as a chaperone.</text>
</comment>
<comment type="induction">
    <text evidence="1">By stress conditions e.g. heat shock (By similarity).</text>
</comment>
<comment type="similarity">
    <text evidence="3">Belongs to the heat shock protein 70 family.</text>
</comment>
<evidence type="ECO:0000250" key="1"/>
<evidence type="ECO:0000256" key="2">
    <source>
        <dbReference type="SAM" id="MobiDB-lite"/>
    </source>
</evidence>
<evidence type="ECO:0000305" key="3"/>
<organism>
    <name type="scientific">Mycolicibacterium paratuberculosis (strain ATCC BAA-968 / K-10)</name>
    <name type="common">Mycobacterium paratuberculosis</name>
    <dbReference type="NCBI Taxonomy" id="262316"/>
    <lineage>
        <taxon>Bacteria</taxon>
        <taxon>Bacillati</taxon>
        <taxon>Actinomycetota</taxon>
        <taxon>Actinomycetes</taxon>
        <taxon>Mycobacteriales</taxon>
        <taxon>Mycobacteriaceae</taxon>
        <taxon>Mycobacterium</taxon>
        <taxon>Mycobacterium avium complex (MAC)</taxon>
    </lineage>
</organism>
<dbReference type="EMBL" id="X59437">
    <property type="protein sequence ID" value="CAA42063.1"/>
    <property type="molecule type" value="Genomic_DNA"/>
</dbReference>
<dbReference type="EMBL" id="AF254578">
    <property type="protein sequence ID" value="AAF65842.1"/>
    <property type="molecule type" value="Genomic_DNA"/>
</dbReference>
<dbReference type="EMBL" id="AE016958">
    <property type="protein sequence ID" value="AAS06390.1"/>
    <property type="molecule type" value="Genomic_DNA"/>
</dbReference>
<dbReference type="PIR" id="S34440">
    <property type="entry name" value="S34440"/>
</dbReference>
<dbReference type="RefSeq" id="WP_003879232.1">
    <property type="nucleotide sequence ID" value="NZ_CP106873.1"/>
</dbReference>
<dbReference type="SMR" id="Q00488"/>
<dbReference type="STRING" id="262316.MAP_3840"/>
<dbReference type="KEGG" id="mpa:MAP_3840"/>
<dbReference type="PATRIC" id="fig|262316.17.peg.4087"/>
<dbReference type="eggNOG" id="COG0443">
    <property type="taxonomic scope" value="Bacteria"/>
</dbReference>
<dbReference type="HOGENOM" id="CLU_005965_2_4_11"/>
<dbReference type="Proteomes" id="UP000000580">
    <property type="component" value="Chromosome"/>
</dbReference>
<dbReference type="GO" id="GO:0005524">
    <property type="term" value="F:ATP binding"/>
    <property type="evidence" value="ECO:0007669"/>
    <property type="project" value="UniProtKB-UniRule"/>
</dbReference>
<dbReference type="GO" id="GO:0140662">
    <property type="term" value="F:ATP-dependent protein folding chaperone"/>
    <property type="evidence" value="ECO:0007669"/>
    <property type="project" value="InterPro"/>
</dbReference>
<dbReference type="GO" id="GO:0051082">
    <property type="term" value="F:unfolded protein binding"/>
    <property type="evidence" value="ECO:0007669"/>
    <property type="project" value="InterPro"/>
</dbReference>
<dbReference type="CDD" id="cd10234">
    <property type="entry name" value="ASKHA_NBD_HSP70_DnaK-like"/>
    <property type="match status" value="1"/>
</dbReference>
<dbReference type="FunFam" id="2.60.34.10:FF:000014">
    <property type="entry name" value="Chaperone protein DnaK HSP70"/>
    <property type="match status" value="1"/>
</dbReference>
<dbReference type="FunFam" id="1.20.1270.10:FF:000001">
    <property type="entry name" value="Molecular chaperone DnaK"/>
    <property type="match status" value="1"/>
</dbReference>
<dbReference type="FunFam" id="3.30.420.40:FF:000071">
    <property type="entry name" value="Molecular chaperone DnaK"/>
    <property type="match status" value="1"/>
</dbReference>
<dbReference type="FunFam" id="3.90.640.10:FF:000003">
    <property type="entry name" value="Molecular chaperone DnaK"/>
    <property type="match status" value="1"/>
</dbReference>
<dbReference type="Gene3D" id="1.20.1270.10">
    <property type="match status" value="1"/>
</dbReference>
<dbReference type="Gene3D" id="3.30.30.30">
    <property type="match status" value="1"/>
</dbReference>
<dbReference type="Gene3D" id="3.30.420.40">
    <property type="match status" value="3"/>
</dbReference>
<dbReference type="Gene3D" id="3.90.640.10">
    <property type="entry name" value="Actin, Chain A, domain 4"/>
    <property type="match status" value="1"/>
</dbReference>
<dbReference type="Gene3D" id="2.60.34.10">
    <property type="entry name" value="Substrate Binding Domain Of DNAk, Chain A, domain 1"/>
    <property type="match status" value="1"/>
</dbReference>
<dbReference type="HAMAP" id="MF_00332">
    <property type="entry name" value="DnaK"/>
    <property type="match status" value="1"/>
</dbReference>
<dbReference type="InterPro" id="IPR043129">
    <property type="entry name" value="ATPase_NBD"/>
</dbReference>
<dbReference type="InterPro" id="IPR012725">
    <property type="entry name" value="Chaperone_DnaK"/>
</dbReference>
<dbReference type="InterPro" id="IPR018181">
    <property type="entry name" value="Heat_shock_70_CS"/>
</dbReference>
<dbReference type="InterPro" id="IPR029048">
    <property type="entry name" value="HSP70_C_sf"/>
</dbReference>
<dbReference type="InterPro" id="IPR029047">
    <property type="entry name" value="HSP70_peptide-bd_sf"/>
</dbReference>
<dbReference type="InterPro" id="IPR013126">
    <property type="entry name" value="Hsp_70_fam"/>
</dbReference>
<dbReference type="NCBIfam" id="NF001413">
    <property type="entry name" value="PRK00290.1"/>
    <property type="match status" value="1"/>
</dbReference>
<dbReference type="NCBIfam" id="TIGR02350">
    <property type="entry name" value="prok_dnaK"/>
    <property type="match status" value="1"/>
</dbReference>
<dbReference type="PANTHER" id="PTHR19375">
    <property type="entry name" value="HEAT SHOCK PROTEIN 70KDA"/>
    <property type="match status" value="1"/>
</dbReference>
<dbReference type="Pfam" id="PF00012">
    <property type="entry name" value="HSP70"/>
    <property type="match status" value="1"/>
</dbReference>
<dbReference type="PRINTS" id="PR00301">
    <property type="entry name" value="HEATSHOCK70"/>
</dbReference>
<dbReference type="SUPFAM" id="SSF53067">
    <property type="entry name" value="Actin-like ATPase domain"/>
    <property type="match status" value="2"/>
</dbReference>
<dbReference type="SUPFAM" id="SSF100934">
    <property type="entry name" value="Heat shock protein 70kD (HSP70), C-terminal subdomain"/>
    <property type="match status" value="1"/>
</dbReference>
<dbReference type="SUPFAM" id="SSF100920">
    <property type="entry name" value="Heat shock protein 70kD (HSP70), peptide-binding domain"/>
    <property type="match status" value="1"/>
</dbReference>
<dbReference type="PROSITE" id="PS00297">
    <property type="entry name" value="HSP70_1"/>
    <property type="match status" value="1"/>
</dbReference>
<dbReference type="PROSITE" id="PS00329">
    <property type="entry name" value="HSP70_2"/>
    <property type="match status" value="1"/>
</dbReference>
<dbReference type="PROSITE" id="PS01036">
    <property type="entry name" value="HSP70_3"/>
    <property type="match status" value="1"/>
</dbReference>
<reference key="1">
    <citation type="journal article" date="1991" name="Nucleic Acids Res.">
        <title>Complete nucleotide sequence of a gene encoding the 70 kd heat shock protein of Mycobacterium paratuberculosis.</title>
        <authorList>
            <person name="Stevenson K."/>
            <person name="Inglis N.F."/>
            <person name="Rae B."/>
            <person name="Donachie W."/>
            <person name="Sharp J.M."/>
        </authorList>
    </citation>
    <scope>NUCLEOTIDE SEQUENCE [GENOMIC DNA]</scope>
</reference>
<reference key="2">
    <citation type="submission" date="2000-04" db="EMBL/GenBank/DDBJ databases">
        <title>Differential changes in heat shock protein, lipoarabinomannan and PPD specific immunoglobulin G1 and G2 isotype responses during bovine Mycobacterium avium ssp. paratuberculosis infection.</title>
        <authorList>
            <person name="Koets A.P."/>
            <person name="Rutten V.P.M.G."/>
            <person name="de Boer M."/>
            <person name="Bakker D."/>
            <person name="Valentin-Weigand P."/>
            <person name="van Eden W."/>
        </authorList>
    </citation>
    <scope>NUCLEOTIDE SEQUENCE [GENOMIC DNA]</scope>
</reference>
<reference key="3">
    <citation type="journal article" date="2005" name="Proc. Natl. Acad. Sci. U.S.A.">
        <title>The complete genome sequence of Mycobacterium avium subspecies paratuberculosis.</title>
        <authorList>
            <person name="Li L."/>
            <person name="Bannantine J.P."/>
            <person name="Zhang Q."/>
            <person name="Amonsin A."/>
            <person name="May B.J."/>
            <person name="Alt D."/>
            <person name="Banerji N."/>
            <person name="Kanjilal S."/>
            <person name="Kapur V."/>
        </authorList>
    </citation>
    <scope>NUCLEOTIDE SEQUENCE [LARGE SCALE GENOMIC DNA]</scope>
    <source>
        <strain>ATCC BAA-968 / K-10</strain>
    </source>
</reference>
<name>DNAK_MYCPA</name>
<feature type="initiator methionine" description="Removed" evidence="1">
    <location>
        <position position="1"/>
    </location>
</feature>
<feature type="chain" id="PRO_0000078494" description="Chaperone protein DnaK">
    <location>
        <begin position="2"/>
        <end position="623"/>
    </location>
</feature>
<feature type="region of interest" description="Disordered" evidence="2">
    <location>
        <begin position="587"/>
        <end position="623"/>
    </location>
</feature>
<feature type="compositionally biased region" description="Gly residues" evidence="2">
    <location>
        <begin position="594"/>
        <end position="605"/>
    </location>
</feature>
<feature type="compositionally biased region" description="Acidic residues" evidence="2">
    <location>
        <begin position="609"/>
        <end position="623"/>
    </location>
</feature>
<feature type="modified residue" description="Phosphothreonine; by autocatalysis" evidence="1">
    <location>
        <position position="175"/>
    </location>
</feature>
<feature type="sequence conflict" description="In Ref. 1; CAA42063." evidence="3" ref="1">
    <original>DL</original>
    <variation>RY</variation>
    <location>
        <begin position="8"/>
        <end position="9"/>
    </location>
</feature>
<keyword id="KW-0067">ATP-binding</keyword>
<keyword id="KW-0143">Chaperone</keyword>
<keyword id="KW-0547">Nucleotide-binding</keyword>
<keyword id="KW-0597">Phosphoprotein</keyword>
<keyword id="KW-1185">Reference proteome</keyword>
<keyword id="KW-0346">Stress response</keyword>
<accession>Q00488</accession>
<accession>Q9L589</accession>
<gene>
    <name type="primary">dnaK</name>
    <name type="ordered locus">MAP_3840</name>
</gene>
<protein>
    <recommendedName>
        <fullName>Chaperone protein DnaK</fullName>
    </recommendedName>
    <alternativeName>
        <fullName>70 kDa antigen</fullName>
    </alternativeName>
    <alternativeName>
        <fullName>HSP70</fullName>
    </alternativeName>
    <alternativeName>
        <fullName>Heat shock 70 kDa protein</fullName>
    </alternativeName>
    <alternativeName>
        <fullName>Heat shock protein 70</fullName>
    </alternativeName>
</protein>
<sequence length="623" mass="66518">MARAVGIDLGTTNSVVAVLEGGDPVVVANSEGSRTTPSIVAFARNGEVLVGQPAKNQAVTNVDRTIRSVKRHMGTDWSIEIDGKKYTAQEISARVLMKLKRDAEAYLGEDITDAVITVPAYFNDAQRQATKEAGQIAGLNVLRIVNEPTAAALAYGLDKGEKEQTILVFDLGGGTFDVSLLEIGEGVVEVRATSGDNQLGGDDWDDRIVNWLVDKFKGTSGIDLTKDKMAMQRLREAAEKAKIELSSSQSTSINLPYITVDADKNPLFLDEQLTRAEFQRITQDLLDRTRQPFKSVIADAGISVSDIDHVVLVGGSTRMPAVTDLVKELTGGKEPNKGVNPDEVVAVGAALQAGVLKGEVKDVLLLDVTPLSLGIETKGGVMTKLIERNTTIPTKRSETFTTADDNQPSVQIQVYQGEREIAAHNKLLGSFELTGIPPAPRGVPQIEVTFDIDANGIVHVTAKDKGTGKENTIKIQEGSGLSKEEIDRMIKDAEAHAEEDRKRREEADVRNQAESLVYQTEKFVKDQREAEGGSKVPEETLSKVDAAIADAKTALGGTDITAIKSAMEKLGQESQALGQAIYEATQAESAQAGGPDGAAAGGGSGSADDVVDAEVVDDDRESK</sequence>
<proteinExistence type="inferred from homology"/>